<evidence type="ECO:0000250" key="1"/>
<evidence type="ECO:0000250" key="2">
    <source>
        <dbReference type="UniProtKB" id="Q2RSB2"/>
    </source>
</evidence>
<evidence type="ECO:0000255" key="3"/>
<reference key="1">
    <citation type="journal article" date="1994" name="Microbiology">
        <title>Cloning and sequencing of the genes for the proton-translocating nicotinamide nucleotide transhydrogenase from Rhodospirillum rubrum and the implications for the domain structure of the enzyme.</title>
        <authorList>
            <person name="Williams R."/>
            <person name="Cotton N.P."/>
            <person name="Thomas C.M."/>
            <person name="Jackson J.B."/>
        </authorList>
    </citation>
    <scope>NUCLEOTIDE SEQUENCE [GENOMIC DNA]</scope>
</reference>
<reference key="2">
    <citation type="journal article" date="2011" name="Stand. Genomic Sci.">
        <title>Complete genome sequence of Rhodospirillum rubrum type strain (S1).</title>
        <authorList>
            <person name="Munk A.C."/>
            <person name="Copeland A."/>
            <person name="Lucas S."/>
            <person name="Lapidus A."/>
            <person name="Del Rio T.G."/>
            <person name="Barry K."/>
            <person name="Detter J.C."/>
            <person name="Hammon N."/>
            <person name="Israni S."/>
            <person name="Pitluck S."/>
            <person name="Brettin T."/>
            <person name="Bruce D."/>
            <person name="Han C."/>
            <person name="Tapia R."/>
            <person name="Gilna P."/>
            <person name="Schmutz J."/>
            <person name="Larimer F."/>
            <person name="Land M."/>
            <person name="Kyrpides N.C."/>
            <person name="Mavromatis K."/>
            <person name="Richardson P."/>
            <person name="Rohde M."/>
            <person name="Goeker M."/>
            <person name="Klenk H.P."/>
            <person name="Zhang Y."/>
            <person name="Roberts G.P."/>
            <person name="Reslewic S."/>
            <person name="Schwartz D.C."/>
        </authorList>
    </citation>
    <scope>NUCLEOTIDE SEQUENCE [LARGE SCALE GENOMIC DNA]</scope>
    <source>
        <strain>ATCC 11170 / ATH 1.1.1 / DSM 467 / LMG 4362 / NCIMB 8255 / S1</strain>
    </source>
</reference>
<protein>
    <recommendedName>
        <fullName>NAD(P) transhydrogenase subunit alpha part 2</fullName>
        <ecNumber evidence="2">7.1.1.1</ecNumber>
    </recommendedName>
    <alternativeName>
        <fullName>Nicotinamide nucleotide transhydrogenase subunit alpha 2</fullName>
    </alternativeName>
    <alternativeName>
        <fullName>Proton-translocating transhydrogenase component 2</fullName>
    </alternativeName>
    <alternativeName>
        <fullName>Pyridine nucleotide transhydrogenase subunit alpha 2</fullName>
    </alternativeName>
    <alternativeName>
        <fullName>dII</fullName>
    </alternativeName>
</protein>
<gene>
    <name type="primary">pntAB</name>
    <name type="synonym">nntA2</name>
    <name type="ordered locus">Rru_A2182</name>
</gene>
<organism>
    <name type="scientific">Rhodospirillum rubrum (strain ATCC 11170 / ATH 1.1.1 / DSM 467 / LMG 4362 / NCIMB 8255 / S1)</name>
    <dbReference type="NCBI Taxonomy" id="269796"/>
    <lineage>
        <taxon>Bacteria</taxon>
        <taxon>Pseudomonadati</taxon>
        <taxon>Pseudomonadota</taxon>
        <taxon>Alphaproteobacteria</taxon>
        <taxon>Rhodospirillales</taxon>
        <taxon>Rhodospirillaceae</taxon>
        <taxon>Rhodospirillum</taxon>
    </lineage>
</organism>
<keyword id="KW-0997">Cell inner membrane</keyword>
<keyword id="KW-1003">Cell membrane</keyword>
<keyword id="KW-0472">Membrane</keyword>
<keyword id="KW-0520">NAD</keyword>
<keyword id="KW-0521">NADP</keyword>
<keyword id="KW-1185">Reference proteome</keyword>
<keyword id="KW-1278">Translocase</keyword>
<keyword id="KW-0812">Transmembrane</keyword>
<keyword id="KW-1133">Transmembrane helix</keyword>
<accession>Q2RSB3</accession>
<accession>Q59762</accession>
<accession>Q59764</accession>
<proteinExistence type="inferred from homology"/>
<name>PNTAB_RHORT</name>
<dbReference type="EC" id="7.1.1.1" evidence="2"/>
<dbReference type="EMBL" id="U05294">
    <property type="protein sequence ID" value="AAA62494.1"/>
    <property type="molecule type" value="Genomic_DNA"/>
</dbReference>
<dbReference type="EMBL" id="CP000230">
    <property type="protein sequence ID" value="ABC22982.1"/>
    <property type="molecule type" value="Genomic_DNA"/>
</dbReference>
<dbReference type="RefSeq" id="WP_011390031.1">
    <property type="nucleotide sequence ID" value="NC_007643.1"/>
</dbReference>
<dbReference type="RefSeq" id="YP_427269.1">
    <property type="nucleotide sequence ID" value="NC_007643.1"/>
</dbReference>
<dbReference type="SMR" id="Q2RSB3"/>
<dbReference type="STRING" id="269796.Rru_A2182"/>
<dbReference type="EnsemblBacteria" id="ABC22982">
    <property type="protein sequence ID" value="ABC22982"/>
    <property type="gene ID" value="Rru_A2182"/>
</dbReference>
<dbReference type="KEGG" id="rru:Rru_A2182"/>
<dbReference type="PATRIC" id="fig|269796.9.peg.2276"/>
<dbReference type="eggNOG" id="COG3288">
    <property type="taxonomic scope" value="Bacteria"/>
</dbReference>
<dbReference type="HOGENOM" id="CLU_137885_0_0_5"/>
<dbReference type="PhylomeDB" id="Q2RSB3"/>
<dbReference type="Proteomes" id="UP000001929">
    <property type="component" value="Chromosome"/>
</dbReference>
<dbReference type="GO" id="GO:0005886">
    <property type="term" value="C:plasma membrane"/>
    <property type="evidence" value="ECO:0007669"/>
    <property type="project" value="UniProtKB-SubCell"/>
</dbReference>
<dbReference type="GO" id="GO:0050661">
    <property type="term" value="F:NADP binding"/>
    <property type="evidence" value="ECO:0007669"/>
    <property type="project" value="TreeGrafter"/>
</dbReference>
<dbReference type="GO" id="GO:0008750">
    <property type="term" value="F:proton-translocating NAD(P)+ transhydrogenase activity"/>
    <property type="evidence" value="ECO:0007669"/>
    <property type="project" value="UniProtKB-EC"/>
</dbReference>
<dbReference type="GO" id="GO:0006740">
    <property type="term" value="P:NADPH regeneration"/>
    <property type="evidence" value="ECO:0007669"/>
    <property type="project" value="TreeGrafter"/>
</dbReference>
<dbReference type="InterPro" id="IPR024605">
    <property type="entry name" value="NADP_transhyd_a_C"/>
</dbReference>
<dbReference type="PANTHER" id="PTHR10160">
    <property type="entry name" value="NAD(P) TRANSHYDROGENASE"/>
    <property type="match status" value="1"/>
</dbReference>
<dbReference type="PANTHER" id="PTHR10160:SF19">
    <property type="entry name" value="PROTON-TRANSLOCATING NAD(P)(+) TRANSHYDROGENASE"/>
    <property type="match status" value="1"/>
</dbReference>
<dbReference type="Pfam" id="PF12769">
    <property type="entry name" value="PNTB_4TM"/>
    <property type="match status" value="1"/>
</dbReference>
<sequence length="139" mass="14889">MEDKNILVEGFNQLSQQALELSQHAQALALQASHAVLPAAAATEGASEFWWLMTVFVLACFIGFYVVWSVTPALHSPLMGVTNAISSVIVVGALIATGPEAFSASKVLGFFAILLASVNIFGGFIVTQRMLAMFKKKQK</sequence>
<comment type="function">
    <text evidence="1">The transhydrogenation between NADH and NADP is coupled to respiration and ATP hydrolysis and functions as a proton pump across the membrane.</text>
</comment>
<comment type="catalytic activity">
    <reaction evidence="2">
        <text>NAD(+) + NADPH + H(+)(in) = NADH + NADP(+) + H(+)(out)</text>
        <dbReference type="Rhea" id="RHEA:47992"/>
        <dbReference type="ChEBI" id="CHEBI:15378"/>
        <dbReference type="ChEBI" id="CHEBI:57540"/>
        <dbReference type="ChEBI" id="CHEBI:57783"/>
        <dbReference type="ChEBI" id="CHEBI:57945"/>
        <dbReference type="ChEBI" id="CHEBI:58349"/>
        <dbReference type="EC" id="7.1.1.1"/>
    </reaction>
</comment>
<comment type="subunit">
    <text evidence="1">Complex of an alpha and a beta chain; in Rhodospirillum, the alpha chain seems to be made of two subunits.</text>
</comment>
<comment type="subcellular location">
    <subcellularLocation>
        <location evidence="1">Cell inner membrane</location>
        <topology evidence="1">Multi-pass membrane protein</topology>
    </subcellularLocation>
</comment>
<feature type="chain" id="PRO_0000231664" description="NAD(P) transhydrogenase subunit alpha part 2">
    <location>
        <begin position="1"/>
        <end position="139"/>
    </location>
</feature>
<feature type="transmembrane region" description="Helical" evidence="3">
    <location>
        <begin position="49"/>
        <end position="69"/>
    </location>
</feature>
<feature type="transmembrane region" description="Helical" evidence="3">
    <location>
        <begin position="78"/>
        <end position="98"/>
    </location>
</feature>
<feature type="transmembrane region" description="Helical" evidence="3">
    <location>
        <begin position="107"/>
        <end position="127"/>
    </location>
</feature>